<keyword id="KW-1185">Reference proteome</keyword>
<keyword id="KW-0964">Secreted</keyword>
<keyword id="KW-0732">Signal</keyword>
<dbReference type="EMBL" id="AL024499">
    <property type="protein sequence ID" value="CAA19709.1"/>
    <property type="molecule type" value="Genomic_DNA"/>
</dbReference>
<dbReference type="PIR" id="T23139">
    <property type="entry name" value="T23139"/>
</dbReference>
<dbReference type="RefSeq" id="NP_497868.1">
    <property type="nucleotide sequence ID" value="NM_065467.5"/>
</dbReference>
<dbReference type="SMR" id="Q9XXA7"/>
<dbReference type="BioGRID" id="40793">
    <property type="interactions" value="2"/>
</dbReference>
<dbReference type="FunCoup" id="Q9XXA7">
    <property type="interactions" value="2494"/>
</dbReference>
<dbReference type="STRING" id="6239.H38K22.3.1"/>
<dbReference type="PaxDb" id="6239-H38K22.3"/>
<dbReference type="PeptideAtlas" id="Q9XXA7"/>
<dbReference type="EnsemblMetazoa" id="H38K22.3.1">
    <property type="protein sequence ID" value="H38K22.3.1"/>
    <property type="gene ID" value="WBGene00006478"/>
</dbReference>
<dbReference type="GeneID" id="175557"/>
<dbReference type="KEGG" id="cel:CELE_H38K22.3"/>
<dbReference type="UCSC" id="H38K22.3">
    <property type="organism name" value="c. elegans"/>
</dbReference>
<dbReference type="AGR" id="WB:WBGene00006478"/>
<dbReference type="CTD" id="175557"/>
<dbReference type="WormBase" id="H38K22.3">
    <property type="protein sequence ID" value="CE18831"/>
    <property type="gene ID" value="WBGene00006478"/>
    <property type="gene designation" value="tag-131"/>
</dbReference>
<dbReference type="eggNOG" id="KOG1108">
    <property type="taxonomic scope" value="Eukaryota"/>
</dbReference>
<dbReference type="GeneTree" id="ENSGT00940000160156"/>
<dbReference type="HOGENOM" id="CLU_065455_0_0_1"/>
<dbReference type="InParanoid" id="Q9XXA7"/>
<dbReference type="OMA" id="GHKHYGP"/>
<dbReference type="OrthoDB" id="10257697at2759"/>
<dbReference type="PhylomeDB" id="Q9XXA7"/>
<dbReference type="PRO" id="PR:Q9XXA7"/>
<dbReference type="Proteomes" id="UP000001940">
    <property type="component" value="Chromosome III"/>
</dbReference>
<dbReference type="Bgee" id="WBGene00006478">
    <property type="expression patterns" value="Expressed in embryo and 4 other cell types or tissues"/>
</dbReference>
<dbReference type="GO" id="GO:0012505">
    <property type="term" value="C:endomembrane system"/>
    <property type="evidence" value="ECO:0000318"/>
    <property type="project" value="GO_Central"/>
</dbReference>
<dbReference type="GO" id="GO:0005576">
    <property type="term" value="C:extracellular region"/>
    <property type="evidence" value="ECO:0007669"/>
    <property type="project" value="UniProtKB-SubCell"/>
</dbReference>
<dbReference type="GO" id="GO:0016020">
    <property type="term" value="C:membrane"/>
    <property type="evidence" value="ECO:0000318"/>
    <property type="project" value="GO_Central"/>
</dbReference>
<dbReference type="Gene3D" id="3.10.120.10">
    <property type="entry name" value="Cytochrome b5-like heme/steroid binding domain"/>
    <property type="match status" value="1"/>
</dbReference>
<dbReference type="InterPro" id="IPR001199">
    <property type="entry name" value="Cyt_B5-like_heme/steroid-bd"/>
</dbReference>
<dbReference type="InterPro" id="IPR036400">
    <property type="entry name" value="Cyt_B5-like_heme/steroid_sf"/>
</dbReference>
<dbReference type="InterPro" id="IPR050577">
    <property type="entry name" value="MAPR/NEUFC/NENF-like"/>
</dbReference>
<dbReference type="PANTHER" id="PTHR10281">
    <property type="entry name" value="MEMBRANE-ASSOCIATED PROGESTERONE RECEPTOR COMPONENT-RELATED"/>
    <property type="match status" value="1"/>
</dbReference>
<dbReference type="PANTHER" id="PTHR10281:SF4">
    <property type="entry name" value="NEUFERRICIN"/>
    <property type="match status" value="1"/>
</dbReference>
<dbReference type="Pfam" id="PF00173">
    <property type="entry name" value="Cyt-b5"/>
    <property type="match status" value="1"/>
</dbReference>
<dbReference type="SMART" id="SM01117">
    <property type="entry name" value="Cyt-b5"/>
    <property type="match status" value="1"/>
</dbReference>
<dbReference type="SUPFAM" id="SSF55856">
    <property type="entry name" value="Cytochrome b5-like heme/steroid binding domain"/>
    <property type="match status" value="1"/>
</dbReference>
<reference key="1">
    <citation type="journal article" date="1998" name="Science">
        <title>Genome sequence of the nematode C. elegans: a platform for investigating biology.</title>
        <authorList>
            <consortium name="The C. elegans sequencing consortium"/>
        </authorList>
    </citation>
    <scope>NUCLEOTIDE SEQUENCE [LARGE SCALE GENOMIC DNA]</scope>
    <source>
        <strain>Bristol N2</strain>
    </source>
</reference>
<protein>
    <recommendedName>
        <fullName>Neuferricin homolog</fullName>
    </recommendedName>
    <alternativeName>
        <fullName>Cytochrome b5 domain-containing protein 2 homolog</fullName>
    </alternativeName>
</protein>
<name>NEUFC_CAEEL</name>
<feature type="signal peptide" evidence="2">
    <location>
        <begin position="1"/>
        <end position="34"/>
    </location>
</feature>
<feature type="chain" id="PRO_0000312327" description="Neuferricin homolog">
    <location>
        <begin position="35"/>
        <end position="326"/>
    </location>
</feature>
<feature type="domain" description="Cytochrome b5 heme-binding">
    <location>
        <begin position="98"/>
        <end position="197"/>
    </location>
</feature>
<proteinExistence type="inferred from homology"/>
<sequence>MDKNRRRTDDAGLMTKTLAGIAALVFFLSFICSSYDITVTHVISTIDVILEESEYYRSAKEWTASSIDATWNEVSIPSRKAEHIQAINPEVDVAAGGKHVFTPEQLHFFDGTRDSKPIYLAILGRVYNVDGKKEYYGPGKSYHHFAGRDATRAFTTGDFQESGLIATTHGLSHDELLSIRDWVSFYDKEYPLVGVVADLYYDSEGQPTPELTDVLARVEKANEYRKAQAVEIEVFPPCNSEYNQNGGRVWCSTKSGGVERQWAGVPRKLIEPTTEKFRCACVKNFGPGVSGAEEVKSSSNRGDLDHPDLELFPDCSPTSNSCKIVS</sequence>
<comment type="function">
    <text evidence="1">Heme-binding protein.</text>
</comment>
<comment type="subcellular location">
    <subcellularLocation>
        <location evidence="1">Secreted</location>
    </subcellularLocation>
</comment>
<comment type="domain">
    <text evidence="1">The cytochrome b5 heme-binding domain was proven to bind heme, although it lacks the conserved iron-binding His residues at position 136 and 169.</text>
</comment>
<comment type="similarity">
    <text evidence="3">Belongs to the cytochrome b5 family. MAPR subfamily.</text>
</comment>
<evidence type="ECO:0000250" key="1"/>
<evidence type="ECO:0000255" key="2"/>
<evidence type="ECO:0000305" key="3"/>
<gene>
    <name type="primary">tag-131</name>
    <name type="ORF">H38K22.3</name>
</gene>
<organism>
    <name type="scientific">Caenorhabditis elegans</name>
    <dbReference type="NCBI Taxonomy" id="6239"/>
    <lineage>
        <taxon>Eukaryota</taxon>
        <taxon>Metazoa</taxon>
        <taxon>Ecdysozoa</taxon>
        <taxon>Nematoda</taxon>
        <taxon>Chromadorea</taxon>
        <taxon>Rhabditida</taxon>
        <taxon>Rhabditina</taxon>
        <taxon>Rhabditomorpha</taxon>
        <taxon>Rhabditoidea</taxon>
        <taxon>Rhabditidae</taxon>
        <taxon>Peloderinae</taxon>
        <taxon>Caenorhabditis</taxon>
    </lineage>
</organism>
<accession>Q9XXA7</accession>